<feature type="chain" id="PRO_1000091879" description="3-deoxy-manno-octulosonate cytidylyltransferase">
    <location>
        <begin position="1"/>
        <end position="250"/>
    </location>
</feature>
<protein>
    <recommendedName>
        <fullName evidence="1">3-deoxy-manno-octulosonate cytidylyltransferase</fullName>
        <ecNumber evidence="1">2.7.7.38</ecNumber>
    </recommendedName>
    <alternativeName>
        <fullName evidence="1">CMP-2-keto-3-deoxyoctulosonic acid synthase</fullName>
        <shortName evidence="1">CKS</shortName>
        <shortName evidence="1">CMP-KDO synthase</shortName>
    </alternativeName>
</protein>
<organism>
    <name type="scientific">Herminiimonas arsenicoxydans</name>
    <dbReference type="NCBI Taxonomy" id="204773"/>
    <lineage>
        <taxon>Bacteria</taxon>
        <taxon>Pseudomonadati</taxon>
        <taxon>Pseudomonadota</taxon>
        <taxon>Betaproteobacteria</taxon>
        <taxon>Burkholderiales</taxon>
        <taxon>Oxalobacteraceae</taxon>
        <taxon>Herminiimonas</taxon>
    </lineage>
</organism>
<sequence length="250" mass="27167">MSFTVIIPARLASTRLPNKPLADLGGKPMIVRVAERAMESGASRVIVATDHADIFAACAQNNVAVQMTRTDHPSGTDRIAEVAAVLGLSDDAVIVNVQGDEPLIDPSLIAATATLISREVPMATAAHTIDDIADAFNPNVVKVVLDKQGRALYFSRATIPWHRDGFAQSREQLPTAYAPLRHIGLYAYRNSFLQAYPQLAVSPLEQIEALEQLRVLWHGVPIAVHVTPHAPAAGVDTPEDLLRVRRYFTQ</sequence>
<gene>
    <name evidence="1" type="primary">kdsB</name>
    <name type="ordered locus">HEAR2488</name>
</gene>
<keyword id="KW-0963">Cytoplasm</keyword>
<keyword id="KW-0448">Lipopolysaccharide biosynthesis</keyword>
<keyword id="KW-0548">Nucleotidyltransferase</keyword>
<keyword id="KW-1185">Reference proteome</keyword>
<keyword id="KW-0808">Transferase</keyword>
<evidence type="ECO:0000255" key="1">
    <source>
        <dbReference type="HAMAP-Rule" id="MF_00057"/>
    </source>
</evidence>
<comment type="function">
    <text evidence="1">Activates KDO (a required 8-carbon sugar) for incorporation into bacterial lipopolysaccharide in Gram-negative bacteria.</text>
</comment>
<comment type="catalytic activity">
    <reaction evidence="1">
        <text>3-deoxy-alpha-D-manno-oct-2-ulosonate + CTP = CMP-3-deoxy-beta-D-manno-octulosonate + diphosphate</text>
        <dbReference type="Rhea" id="RHEA:23448"/>
        <dbReference type="ChEBI" id="CHEBI:33019"/>
        <dbReference type="ChEBI" id="CHEBI:37563"/>
        <dbReference type="ChEBI" id="CHEBI:85986"/>
        <dbReference type="ChEBI" id="CHEBI:85987"/>
        <dbReference type="EC" id="2.7.7.38"/>
    </reaction>
</comment>
<comment type="pathway">
    <text evidence="1">Nucleotide-sugar biosynthesis; CMP-3-deoxy-D-manno-octulosonate biosynthesis; CMP-3-deoxy-D-manno-octulosonate from 3-deoxy-D-manno-octulosonate and CTP: step 1/1.</text>
</comment>
<comment type="pathway">
    <text evidence="1">Bacterial outer membrane biogenesis; lipopolysaccharide biosynthesis.</text>
</comment>
<comment type="subcellular location">
    <subcellularLocation>
        <location evidence="1">Cytoplasm</location>
    </subcellularLocation>
</comment>
<comment type="similarity">
    <text evidence="1">Belongs to the KdsB family.</text>
</comment>
<accession>A4G7X9</accession>
<dbReference type="EC" id="2.7.7.38" evidence="1"/>
<dbReference type="EMBL" id="CU207211">
    <property type="protein sequence ID" value="CAL62616.1"/>
    <property type="molecule type" value="Genomic_DNA"/>
</dbReference>
<dbReference type="SMR" id="A4G7X9"/>
<dbReference type="STRING" id="204773.HEAR2488"/>
<dbReference type="KEGG" id="har:HEAR2488"/>
<dbReference type="eggNOG" id="COG1212">
    <property type="taxonomic scope" value="Bacteria"/>
</dbReference>
<dbReference type="HOGENOM" id="CLU_065038_1_0_4"/>
<dbReference type="OrthoDB" id="9815559at2"/>
<dbReference type="UniPathway" id="UPA00030"/>
<dbReference type="UniPathway" id="UPA00358">
    <property type="reaction ID" value="UER00476"/>
</dbReference>
<dbReference type="Proteomes" id="UP000006697">
    <property type="component" value="Chromosome"/>
</dbReference>
<dbReference type="GO" id="GO:0005829">
    <property type="term" value="C:cytosol"/>
    <property type="evidence" value="ECO:0007669"/>
    <property type="project" value="TreeGrafter"/>
</dbReference>
<dbReference type="GO" id="GO:0008690">
    <property type="term" value="F:3-deoxy-manno-octulosonate cytidylyltransferase activity"/>
    <property type="evidence" value="ECO:0007669"/>
    <property type="project" value="UniProtKB-UniRule"/>
</dbReference>
<dbReference type="GO" id="GO:0033468">
    <property type="term" value="P:CMP-keto-3-deoxy-D-manno-octulosonic acid biosynthetic process"/>
    <property type="evidence" value="ECO:0007669"/>
    <property type="project" value="UniProtKB-UniRule"/>
</dbReference>
<dbReference type="GO" id="GO:0009103">
    <property type="term" value="P:lipopolysaccharide biosynthetic process"/>
    <property type="evidence" value="ECO:0007669"/>
    <property type="project" value="UniProtKB-UniRule"/>
</dbReference>
<dbReference type="CDD" id="cd02517">
    <property type="entry name" value="CMP-KDO-Synthetase"/>
    <property type="match status" value="1"/>
</dbReference>
<dbReference type="FunFam" id="3.90.550.10:FF:000011">
    <property type="entry name" value="3-deoxy-manno-octulosonate cytidylyltransferase"/>
    <property type="match status" value="1"/>
</dbReference>
<dbReference type="Gene3D" id="3.90.550.10">
    <property type="entry name" value="Spore Coat Polysaccharide Biosynthesis Protein SpsA, Chain A"/>
    <property type="match status" value="1"/>
</dbReference>
<dbReference type="HAMAP" id="MF_00057">
    <property type="entry name" value="KdsB"/>
    <property type="match status" value="1"/>
</dbReference>
<dbReference type="InterPro" id="IPR003329">
    <property type="entry name" value="Cytidylyl_trans"/>
</dbReference>
<dbReference type="InterPro" id="IPR004528">
    <property type="entry name" value="KdsB"/>
</dbReference>
<dbReference type="InterPro" id="IPR029044">
    <property type="entry name" value="Nucleotide-diphossugar_trans"/>
</dbReference>
<dbReference type="NCBIfam" id="TIGR00466">
    <property type="entry name" value="kdsB"/>
    <property type="match status" value="1"/>
</dbReference>
<dbReference type="NCBIfam" id="NF003952">
    <property type="entry name" value="PRK05450.1-5"/>
    <property type="match status" value="1"/>
</dbReference>
<dbReference type="NCBIfam" id="NF009905">
    <property type="entry name" value="PRK13368.1"/>
    <property type="match status" value="1"/>
</dbReference>
<dbReference type="PANTHER" id="PTHR42866">
    <property type="entry name" value="3-DEOXY-MANNO-OCTULOSONATE CYTIDYLYLTRANSFERASE"/>
    <property type="match status" value="1"/>
</dbReference>
<dbReference type="PANTHER" id="PTHR42866:SF2">
    <property type="entry name" value="3-DEOXY-MANNO-OCTULOSONATE CYTIDYLYLTRANSFERASE, MITOCHONDRIAL"/>
    <property type="match status" value="1"/>
</dbReference>
<dbReference type="Pfam" id="PF02348">
    <property type="entry name" value="CTP_transf_3"/>
    <property type="match status" value="1"/>
</dbReference>
<dbReference type="SUPFAM" id="SSF53448">
    <property type="entry name" value="Nucleotide-diphospho-sugar transferases"/>
    <property type="match status" value="1"/>
</dbReference>
<proteinExistence type="inferred from homology"/>
<name>KDSB_HERAR</name>
<reference key="1">
    <citation type="journal article" date="2007" name="PLoS Genet.">
        <title>A tale of two oxidation states: bacterial colonization of arsenic-rich environments.</title>
        <authorList>
            <person name="Muller D."/>
            <person name="Medigue C."/>
            <person name="Koechler S."/>
            <person name="Barbe V."/>
            <person name="Barakat M."/>
            <person name="Talla E."/>
            <person name="Bonnefoy V."/>
            <person name="Krin E."/>
            <person name="Arsene-Ploetze F."/>
            <person name="Carapito C."/>
            <person name="Chandler M."/>
            <person name="Cournoyer B."/>
            <person name="Cruveiller S."/>
            <person name="Dossat C."/>
            <person name="Duval S."/>
            <person name="Heymann M."/>
            <person name="Leize E."/>
            <person name="Lieutaud A."/>
            <person name="Lievremont D."/>
            <person name="Makita Y."/>
            <person name="Mangenot S."/>
            <person name="Nitschke W."/>
            <person name="Ortet P."/>
            <person name="Perdrial N."/>
            <person name="Schoepp B."/>
            <person name="Siguier P."/>
            <person name="Simeonova D.D."/>
            <person name="Rouy Z."/>
            <person name="Segurens B."/>
            <person name="Turlin E."/>
            <person name="Vallenet D."/>
            <person name="van Dorsselaer A."/>
            <person name="Weiss S."/>
            <person name="Weissenbach J."/>
            <person name="Lett M.-C."/>
            <person name="Danchin A."/>
            <person name="Bertin P.N."/>
        </authorList>
    </citation>
    <scope>NUCLEOTIDE SEQUENCE [LARGE SCALE GENOMIC DNA]</scope>
    <source>
        <strain>ULPAs1</strain>
    </source>
</reference>